<sequence>MSSSFFKKRLSPIKPGDPIDYKDVDLLKKFITERGKILPRRLTGLTAKQQRDLTNAVKRARIVALLPFVNPEG</sequence>
<gene>
    <name evidence="1" type="primary">rpsR</name>
    <name evidence="1" type="synonym">rps18</name>
    <name type="ordered locus">SynWH7803_1292</name>
</gene>
<dbReference type="EMBL" id="CT971583">
    <property type="protein sequence ID" value="CAK23718.1"/>
    <property type="molecule type" value="Genomic_DNA"/>
</dbReference>
<dbReference type="SMR" id="A5GLA3"/>
<dbReference type="STRING" id="32051.SynWH7803_1292"/>
<dbReference type="KEGG" id="syx:SynWH7803_1292"/>
<dbReference type="eggNOG" id="COG0238">
    <property type="taxonomic scope" value="Bacteria"/>
</dbReference>
<dbReference type="HOGENOM" id="CLU_148710_2_3_3"/>
<dbReference type="OrthoDB" id="9812008at2"/>
<dbReference type="Proteomes" id="UP000001566">
    <property type="component" value="Chromosome"/>
</dbReference>
<dbReference type="GO" id="GO:0022627">
    <property type="term" value="C:cytosolic small ribosomal subunit"/>
    <property type="evidence" value="ECO:0007669"/>
    <property type="project" value="TreeGrafter"/>
</dbReference>
<dbReference type="GO" id="GO:0070181">
    <property type="term" value="F:small ribosomal subunit rRNA binding"/>
    <property type="evidence" value="ECO:0007669"/>
    <property type="project" value="TreeGrafter"/>
</dbReference>
<dbReference type="GO" id="GO:0003735">
    <property type="term" value="F:structural constituent of ribosome"/>
    <property type="evidence" value="ECO:0007669"/>
    <property type="project" value="InterPro"/>
</dbReference>
<dbReference type="GO" id="GO:0006412">
    <property type="term" value="P:translation"/>
    <property type="evidence" value="ECO:0007669"/>
    <property type="project" value="UniProtKB-UniRule"/>
</dbReference>
<dbReference type="FunFam" id="4.10.640.10:FF:000002">
    <property type="entry name" value="30S ribosomal protein S18, chloroplastic"/>
    <property type="match status" value="1"/>
</dbReference>
<dbReference type="Gene3D" id="4.10.640.10">
    <property type="entry name" value="Ribosomal protein S18"/>
    <property type="match status" value="1"/>
</dbReference>
<dbReference type="HAMAP" id="MF_00270">
    <property type="entry name" value="Ribosomal_bS18"/>
    <property type="match status" value="1"/>
</dbReference>
<dbReference type="InterPro" id="IPR001648">
    <property type="entry name" value="Ribosomal_bS18"/>
</dbReference>
<dbReference type="InterPro" id="IPR018275">
    <property type="entry name" value="Ribosomal_bS18_CS"/>
</dbReference>
<dbReference type="InterPro" id="IPR036870">
    <property type="entry name" value="Ribosomal_bS18_sf"/>
</dbReference>
<dbReference type="NCBIfam" id="TIGR00165">
    <property type="entry name" value="S18"/>
    <property type="match status" value="1"/>
</dbReference>
<dbReference type="PANTHER" id="PTHR13479">
    <property type="entry name" value="30S RIBOSOMAL PROTEIN S18"/>
    <property type="match status" value="1"/>
</dbReference>
<dbReference type="PANTHER" id="PTHR13479:SF40">
    <property type="entry name" value="SMALL RIBOSOMAL SUBUNIT PROTEIN BS18M"/>
    <property type="match status" value="1"/>
</dbReference>
<dbReference type="Pfam" id="PF01084">
    <property type="entry name" value="Ribosomal_S18"/>
    <property type="match status" value="1"/>
</dbReference>
<dbReference type="PRINTS" id="PR00974">
    <property type="entry name" value="RIBOSOMALS18"/>
</dbReference>
<dbReference type="SUPFAM" id="SSF46911">
    <property type="entry name" value="Ribosomal protein S18"/>
    <property type="match status" value="1"/>
</dbReference>
<dbReference type="PROSITE" id="PS00057">
    <property type="entry name" value="RIBOSOMAL_S18"/>
    <property type="match status" value="1"/>
</dbReference>
<evidence type="ECO:0000255" key="1">
    <source>
        <dbReference type="HAMAP-Rule" id="MF_00270"/>
    </source>
</evidence>
<evidence type="ECO:0000305" key="2"/>
<feature type="chain" id="PRO_1000003643" description="Small ribosomal subunit protein bS18">
    <location>
        <begin position="1"/>
        <end position="73"/>
    </location>
</feature>
<accession>A5GLA3</accession>
<keyword id="KW-1185">Reference proteome</keyword>
<keyword id="KW-0687">Ribonucleoprotein</keyword>
<keyword id="KW-0689">Ribosomal protein</keyword>
<keyword id="KW-0694">RNA-binding</keyword>
<keyword id="KW-0699">rRNA-binding</keyword>
<name>RS18_SYNPW</name>
<reference key="1">
    <citation type="submission" date="2006-05" db="EMBL/GenBank/DDBJ databases">
        <authorList>
            <consortium name="Genoscope"/>
        </authorList>
    </citation>
    <scope>NUCLEOTIDE SEQUENCE [LARGE SCALE GENOMIC DNA]</scope>
    <source>
        <strain>WH7803</strain>
    </source>
</reference>
<organism>
    <name type="scientific">Synechococcus sp. (strain WH7803)</name>
    <dbReference type="NCBI Taxonomy" id="32051"/>
    <lineage>
        <taxon>Bacteria</taxon>
        <taxon>Bacillati</taxon>
        <taxon>Cyanobacteriota</taxon>
        <taxon>Cyanophyceae</taxon>
        <taxon>Synechococcales</taxon>
        <taxon>Synechococcaceae</taxon>
        <taxon>Synechococcus</taxon>
    </lineage>
</organism>
<comment type="function">
    <text evidence="1">Binds as a heterodimer with protein bS6 to the central domain of the 16S rRNA, where it helps stabilize the platform of the 30S subunit.</text>
</comment>
<comment type="subunit">
    <text evidence="1">Part of the 30S ribosomal subunit. Forms a tight heterodimer with protein bS6.</text>
</comment>
<comment type="similarity">
    <text evidence="1">Belongs to the bacterial ribosomal protein bS18 family.</text>
</comment>
<proteinExistence type="inferred from homology"/>
<protein>
    <recommendedName>
        <fullName evidence="1">Small ribosomal subunit protein bS18</fullName>
    </recommendedName>
    <alternativeName>
        <fullName evidence="2">30S ribosomal protein S18</fullName>
    </alternativeName>
</protein>